<sequence length="236" mass="26048">VIGGDECNINEHRFLVALYTSRTLFCGGTLINQEWVLTAAHCNMEDIQIKLGMHSKKVPNEDEQKRVPKEKFFCLSSKKLYLWDKDIMLIRLDSPVKNSAHIAPLSLPSSPPSVGSVCRTMGWGRISSTKETYPDVPHCVNINLLEYEMCRAPYPEFELPATSRTLCAGILEGGKDTCVGDSGGPLICNGQFQGIASWGDHPCAQPHKPAAYTKVFDHLDWIENIIAGNTDASCPP</sequence>
<protein>
    <recommendedName>
        <fullName>Snake venom serine protease pallase</fullName>
        <shortName>SVSP pallase</shortName>
        <ecNumber>3.4.21.-</ecNumber>
    </recommendedName>
</protein>
<reference key="1">
    <citation type="journal article" date="1999" name="Sheng Wu Hua Xue Yu Sheng Wu Wu Li Xue Bao">
        <title>Cloning and expression of cDNA for thrombin-like enzyme from Agkistrodon halys pallas snake venom.</title>
        <authorList>
            <person name="Pan H."/>
            <person name="Zhou Y.C."/>
            <person name="Yang G.Z."/>
            <person name="Wu X.F."/>
        </authorList>
    </citation>
    <scope>NUCLEOTIDE SEQUENCE [MRNA]</scope>
    <source>
        <tissue>Venom gland</tissue>
    </source>
</reference>
<name>VSPPE_GLOHA</name>
<organism>
    <name type="scientific">Gloydius halys</name>
    <name type="common">Chinese water mocassin</name>
    <name type="synonym">Agkistrodon halys</name>
    <dbReference type="NCBI Taxonomy" id="8714"/>
    <lineage>
        <taxon>Eukaryota</taxon>
        <taxon>Metazoa</taxon>
        <taxon>Chordata</taxon>
        <taxon>Craniata</taxon>
        <taxon>Vertebrata</taxon>
        <taxon>Euteleostomi</taxon>
        <taxon>Lepidosauria</taxon>
        <taxon>Squamata</taxon>
        <taxon>Bifurcata</taxon>
        <taxon>Unidentata</taxon>
        <taxon>Episquamata</taxon>
        <taxon>Toxicofera</taxon>
        <taxon>Serpentes</taxon>
        <taxon>Colubroidea</taxon>
        <taxon>Viperidae</taxon>
        <taxon>Crotalinae</taxon>
        <taxon>Gloydius</taxon>
    </lineage>
</organism>
<evidence type="ECO:0000250" key="1"/>
<evidence type="ECO:0000255" key="2">
    <source>
        <dbReference type="PROSITE-ProRule" id="PRU00274"/>
    </source>
</evidence>
<evidence type="ECO:0000305" key="3"/>
<dbReference type="EC" id="3.4.21.-"/>
<dbReference type="EMBL" id="AF088996">
    <property type="protein sequence ID" value="AAC34898.1"/>
    <property type="status" value="ALT_INIT"/>
    <property type="molecule type" value="mRNA"/>
</dbReference>
<dbReference type="SMR" id="O93421"/>
<dbReference type="MEROPS" id="S01.333"/>
<dbReference type="GO" id="GO:0005576">
    <property type="term" value="C:extracellular region"/>
    <property type="evidence" value="ECO:0007669"/>
    <property type="project" value="UniProtKB-SubCell"/>
</dbReference>
<dbReference type="GO" id="GO:0030141">
    <property type="term" value="C:secretory granule"/>
    <property type="evidence" value="ECO:0007669"/>
    <property type="project" value="TreeGrafter"/>
</dbReference>
<dbReference type="GO" id="GO:0004252">
    <property type="term" value="F:serine-type endopeptidase activity"/>
    <property type="evidence" value="ECO:0007669"/>
    <property type="project" value="InterPro"/>
</dbReference>
<dbReference type="GO" id="GO:0090729">
    <property type="term" value="F:toxin activity"/>
    <property type="evidence" value="ECO:0007669"/>
    <property type="project" value="UniProtKB-KW"/>
</dbReference>
<dbReference type="GO" id="GO:0006508">
    <property type="term" value="P:proteolysis"/>
    <property type="evidence" value="ECO:0007669"/>
    <property type="project" value="UniProtKB-KW"/>
</dbReference>
<dbReference type="CDD" id="cd00190">
    <property type="entry name" value="Tryp_SPc"/>
    <property type="match status" value="1"/>
</dbReference>
<dbReference type="FunFam" id="2.40.10.10:FF:000158">
    <property type="entry name" value="Thrombin-like enzyme saxthrombin"/>
    <property type="match status" value="1"/>
</dbReference>
<dbReference type="FunFam" id="2.40.10.10:FF:000153">
    <property type="entry name" value="Venom plasminogen activator TSV-PA"/>
    <property type="match status" value="1"/>
</dbReference>
<dbReference type="Gene3D" id="2.40.10.10">
    <property type="entry name" value="Trypsin-like serine proteases"/>
    <property type="match status" value="2"/>
</dbReference>
<dbReference type="InterPro" id="IPR009003">
    <property type="entry name" value="Peptidase_S1_PA"/>
</dbReference>
<dbReference type="InterPro" id="IPR043504">
    <property type="entry name" value="Peptidase_S1_PA_chymotrypsin"/>
</dbReference>
<dbReference type="InterPro" id="IPR001314">
    <property type="entry name" value="Peptidase_S1A"/>
</dbReference>
<dbReference type="InterPro" id="IPR001254">
    <property type="entry name" value="Trypsin_dom"/>
</dbReference>
<dbReference type="InterPro" id="IPR018114">
    <property type="entry name" value="TRYPSIN_HIS"/>
</dbReference>
<dbReference type="InterPro" id="IPR033116">
    <property type="entry name" value="TRYPSIN_SER"/>
</dbReference>
<dbReference type="PANTHER" id="PTHR24271:SF47">
    <property type="entry name" value="KALLIKREIN-1"/>
    <property type="match status" value="1"/>
</dbReference>
<dbReference type="PANTHER" id="PTHR24271">
    <property type="entry name" value="KALLIKREIN-RELATED"/>
    <property type="match status" value="1"/>
</dbReference>
<dbReference type="Pfam" id="PF00089">
    <property type="entry name" value="Trypsin"/>
    <property type="match status" value="1"/>
</dbReference>
<dbReference type="PRINTS" id="PR00722">
    <property type="entry name" value="CHYMOTRYPSIN"/>
</dbReference>
<dbReference type="SMART" id="SM00020">
    <property type="entry name" value="Tryp_SPc"/>
    <property type="match status" value="1"/>
</dbReference>
<dbReference type="SUPFAM" id="SSF50494">
    <property type="entry name" value="Trypsin-like serine proteases"/>
    <property type="match status" value="1"/>
</dbReference>
<dbReference type="PROSITE" id="PS50240">
    <property type="entry name" value="TRYPSIN_DOM"/>
    <property type="match status" value="1"/>
</dbReference>
<dbReference type="PROSITE" id="PS00134">
    <property type="entry name" value="TRYPSIN_HIS"/>
    <property type="match status" value="1"/>
</dbReference>
<dbReference type="PROSITE" id="PS00135">
    <property type="entry name" value="TRYPSIN_SER"/>
    <property type="match status" value="1"/>
</dbReference>
<keyword id="KW-1015">Disulfide bond</keyword>
<keyword id="KW-1199">Hemostasis impairing toxin</keyword>
<keyword id="KW-0378">Hydrolase</keyword>
<keyword id="KW-0645">Protease</keyword>
<keyword id="KW-0964">Secreted</keyword>
<keyword id="KW-0720">Serine protease</keyword>
<keyword id="KW-0800">Toxin</keyword>
<comment type="function">
    <text evidence="1">Snake venom serine protease that may act in the hemostasis system of the prey.</text>
</comment>
<comment type="subunit">
    <text evidence="1">Monomer.</text>
</comment>
<comment type="subcellular location">
    <subcellularLocation>
        <location evidence="1">Secreted</location>
    </subcellularLocation>
</comment>
<comment type="tissue specificity">
    <text>Expressed by the venom gland.</text>
</comment>
<comment type="similarity">
    <text evidence="2">Belongs to the peptidase S1 family. Snake venom subfamily.</text>
</comment>
<comment type="sequence caution" evidence="3">
    <conflict type="erroneous initiation">
        <sequence resource="EMBL-CDS" id="AAC34898"/>
    </conflict>
</comment>
<accession>O93421</accession>
<proteinExistence type="evidence at transcript level"/>
<feature type="chain" id="PRO_0000296196" description="Snake venom serine protease pallase">
    <location>
        <begin position="1"/>
        <end position="236"/>
    </location>
</feature>
<feature type="domain" description="Peptidase S1" evidence="2">
    <location>
        <begin position="1"/>
        <end position="227"/>
    </location>
</feature>
<feature type="active site" description="Charge relay system" evidence="1">
    <location>
        <position position="41"/>
    </location>
</feature>
<feature type="active site" description="Charge relay system" evidence="1">
    <location>
        <position position="86"/>
    </location>
</feature>
<feature type="active site" description="Charge relay system" evidence="1">
    <location>
        <position position="182"/>
    </location>
</feature>
<feature type="disulfide bond" evidence="2">
    <location>
        <begin position="7"/>
        <end position="139"/>
    </location>
</feature>
<feature type="disulfide bond" evidence="2">
    <location>
        <begin position="26"/>
        <end position="42"/>
    </location>
</feature>
<feature type="disulfide bond" evidence="2">
    <location>
        <begin position="74"/>
        <end position="234"/>
    </location>
</feature>
<feature type="disulfide bond" evidence="2">
    <location>
        <begin position="118"/>
        <end position="188"/>
    </location>
</feature>
<feature type="disulfide bond" evidence="2">
    <location>
        <begin position="150"/>
        <end position="167"/>
    </location>
</feature>
<feature type="disulfide bond" evidence="2">
    <location>
        <begin position="178"/>
        <end position="203"/>
    </location>
</feature>